<reference key="1">
    <citation type="submission" date="2007-03" db="EMBL/GenBank/DDBJ databases">
        <title>Sequencing analysis of Aethionema coridifolium chloroplast DNA.</title>
        <authorList>
            <person name="Hosouchi T."/>
            <person name="Tsuruoka H."/>
            <person name="Kotani H."/>
        </authorList>
    </citation>
    <scope>NUCLEOTIDE SEQUENCE [LARGE SCALE GENOMIC DNA]</scope>
</reference>
<organism>
    <name type="scientific">Aethionema cordifolium</name>
    <name type="common">Lebanon stonecress</name>
    <dbReference type="NCBI Taxonomy" id="434059"/>
    <lineage>
        <taxon>Eukaryota</taxon>
        <taxon>Viridiplantae</taxon>
        <taxon>Streptophyta</taxon>
        <taxon>Embryophyta</taxon>
        <taxon>Tracheophyta</taxon>
        <taxon>Spermatophyta</taxon>
        <taxon>Magnoliopsida</taxon>
        <taxon>eudicotyledons</taxon>
        <taxon>Gunneridae</taxon>
        <taxon>Pentapetalae</taxon>
        <taxon>rosids</taxon>
        <taxon>malvids</taxon>
        <taxon>Brassicales</taxon>
        <taxon>Brassicaceae</taxon>
        <taxon>Aethionemeae</taxon>
        <taxon>Aethionema</taxon>
    </lineage>
</organism>
<gene>
    <name evidence="1" type="primary">rps18</name>
</gene>
<dbReference type="EMBL" id="AP009366">
    <property type="protein sequence ID" value="BAF49792.1"/>
    <property type="molecule type" value="Genomic_DNA"/>
</dbReference>
<dbReference type="RefSeq" id="YP_001122968.1">
    <property type="nucleotide sequence ID" value="NC_009265.1"/>
</dbReference>
<dbReference type="SMR" id="A4QJD7"/>
<dbReference type="GeneID" id="4968620"/>
<dbReference type="GO" id="GO:0009507">
    <property type="term" value="C:chloroplast"/>
    <property type="evidence" value="ECO:0007669"/>
    <property type="project" value="UniProtKB-SubCell"/>
</dbReference>
<dbReference type="GO" id="GO:0005763">
    <property type="term" value="C:mitochondrial small ribosomal subunit"/>
    <property type="evidence" value="ECO:0007669"/>
    <property type="project" value="TreeGrafter"/>
</dbReference>
<dbReference type="GO" id="GO:0070181">
    <property type="term" value="F:small ribosomal subunit rRNA binding"/>
    <property type="evidence" value="ECO:0007669"/>
    <property type="project" value="TreeGrafter"/>
</dbReference>
<dbReference type="GO" id="GO:0003735">
    <property type="term" value="F:structural constituent of ribosome"/>
    <property type="evidence" value="ECO:0007669"/>
    <property type="project" value="InterPro"/>
</dbReference>
<dbReference type="GO" id="GO:0006412">
    <property type="term" value="P:translation"/>
    <property type="evidence" value="ECO:0007669"/>
    <property type="project" value="UniProtKB-UniRule"/>
</dbReference>
<dbReference type="FunFam" id="4.10.640.10:FF:000002">
    <property type="entry name" value="30S ribosomal protein S18, chloroplastic"/>
    <property type="match status" value="1"/>
</dbReference>
<dbReference type="Gene3D" id="4.10.640.10">
    <property type="entry name" value="Ribosomal protein S18"/>
    <property type="match status" value="1"/>
</dbReference>
<dbReference type="HAMAP" id="MF_00270">
    <property type="entry name" value="Ribosomal_bS18"/>
    <property type="match status" value="1"/>
</dbReference>
<dbReference type="InterPro" id="IPR001648">
    <property type="entry name" value="Ribosomal_bS18"/>
</dbReference>
<dbReference type="InterPro" id="IPR018275">
    <property type="entry name" value="Ribosomal_bS18_CS"/>
</dbReference>
<dbReference type="InterPro" id="IPR036870">
    <property type="entry name" value="Ribosomal_bS18_sf"/>
</dbReference>
<dbReference type="NCBIfam" id="TIGR00165">
    <property type="entry name" value="S18"/>
    <property type="match status" value="1"/>
</dbReference>
<dbReference type="PANTHER" id="PTHR13479">
    <property type="entry name" value="30S RIBOSOMAL PROTEIN S18"/>
    <property type="match status" value="1"/>
</dbReference>
<dbReference type="PANTHER" id="PTHR13479:SF40">
    <property type="entry name" value="SMALL RIBOSOMAL SUBUNIT PROTEIN BS18M"/>
    <property type="match status" value="1"/>
</dbReference>
<dbReference type="Pfam" id="PF01084">
    <property type="entry name" value="Ribosomal_S18"/>
    <property type="match status" value="1"/>
</dbReference>
<dbReference type="PRINTS" id="PR00974">
    <property type="entry name" value="RIBOSOMALS18"/>
</dbReference>
<dbReference type="SUPFAM" id="SSF46911">
    <property type="entry name" value="Ribosomal protein S18"/>
    <property type="match status" value="1"/>
</dbReference>
<dbReference type="PROSITE" id="PS00057">
    <property type="entry name" value="RIBOSOMAL_S18"/>
    <property type="match status" value="1"/>
</dbReference>
<comment type="subunit">
    <text evidence="1">Part of the 30S ribosomal subunit.</text>
</comment>
<comment type="subcellular location">
    <subcellularLocation>
        <location>Plastid</location>
        <location>Chloroplast</location>
    </subcellularLocation>
</comment>
<comment type="similarity">
    <text evidence="1">Belongs to the bacterial ribosomal protein bS18 family.</text>
</comment>
<name>RR18_AETCO</name>
<keyword id="KW-0150">Chloroplast</keyword>
<keyword id="KW-0934">Plastid</keyword>
<keyword id="KW-0687">Ribonucleoprotein</keyword>
<keyword id="KW-0689">Ribosomal protein</keyword>
<keyword id="KW-0694">RNA-binding</keyword>
<keyword id="KW-0699">rRNA-binding</keyword>
<proteinExistence type="inferred from homology"/>
<geneLocation type="chloroplast"/>
<feature type="chain" id="PRO_0000345564" description="Small ribosomal subunit protein bS18c">
    <location>
        <begin position="1"/>
        <end position="101"/>
    </location>
</feature>
<protein>
    <recommendedName>
        <fullName evidence="1">Small ribosomal subunit protein bS18c</fullName>
    </recommendedName>
    <alternativeName>
        <fullName evidence="2">30S ribosomal protein S18, chloroplastic</fullName>
    </alternativeName>
</protein>
<accession>A4QJD7</accession>
<sequence length="101" mass="12056">MNKSKRLFPKSKRSFRRRLPPIQSGDRIDYRNMSLISRFISEQGKILSRRVNRVTLKQQRLITIAIKQARILSLLPFINNQKQFERSESTPRTTSLRTRKK</sequence>
<evidence type="ECO:0000255" key="1">
    <source>
        <dbReference type="HAMAP-Rule" id="MF_00270"/>
    </source>
</evidence>
<evidence type="ECO:0000305" key="2"/>